<keyword id="KW-0963">Cytoplasm</keyword>
<keyword id="KW-0206">Cytoskeleton</keyword>
<keyword id="KW-1185">Reference proteome</keyword>
<gene>
    <name type="primary">cep76</name>
</gene>
<evidence type="ECO:0000250" key="1"/>
<evidence type="ECO:0000305" key="2"/>
<reference key="1">
    <citation type="submission" date="2004-07" db="EMBL/GenBank/DDBJ databases">
        <authorList>
            <consortium name="NIH - Xenopus Gene Collection (XGC) project"/>
        </authorList>
    </citation>
    <scope>NUCLEOTIDE SEQUENCE [LARGE SCALE MRNA]</scope>
    <source>
        <tissue>Embryo</tissue>
    </source>
</reference>
<accession>Q6DDX8</accession>
<sequence length="661" mass="74966">MALPPEKATELKQIIHEQLTRMDVHGKIREVLAESLREEFQTESQQLSEEDLMQALRQRGIVDEVMKELHFMEDRHTRELTSTPKPATHYIDKETRSLRKTNVDPTRRYLHLQVLNGKAFLEHLQESDPLPGQACSTFTLCLHFRNQRFRSKPVPCACEPDFQDGFLLEVHKDSLGDGSKMADATTMLSICDPVQLVLLKTDTSGETTLVSSHFLEWRSILGTEKGVTSLAVELLGVGSECKVSVGVLNVKLELYPPLNKTLSQEVINTQLTLERQKTAEKERLFLVYAKQWWREYLQIRPSHNSRLVKIFAQDENWVNRPVCSYIRPLRAGRLLDTPRQAARFVNVLGYERAPTVGGGGKPEQWCTLLAFLCRNKGDCEDHCNLLCCLLLGFGLDAYVCVGTKGRGQAHTWVMTCGADGAITFWESLTGHRYVHKPINPDDPPMVEQPKPLYPYKTIGCVFSHKRFLANSQPLDAVEVCVFDLHDESRWKPMSEEAIKSVCSPGSLASLPPFPPLCSSLLDAATESNEIELQLRLLVLEHRKDLDLTTVWDDQLSYLLSPALASYEIERTTGISAGNEEFQDSIRRAVPDGHTFKGFPIHFVHRNARRAFATCLRSPFCDEIISCRGDQMRLAVRVRVYTYPEAACAVWIMFACKYRCVL</sequence>
<protein>
    <recommendedName>
        <fullName>Centrosomal protein of 76 kDa</fullName>
        <shortName>Cep76</shortName>
    </recommendedName>
</protein>
<comment type="function">
    <text evidence="1">Centrosomal protein involved in regulation of centriole duplication. Required to limit centriole duplication to once per cell cycle by preventing centriole reduplication (By similarity).</text>
</comment>
<comment type="subcellular location">
    <subcellularLocation>
        <location evidence="1">Cytoplasm</location>
        <location evidence="1">Cytoskeleton</location>
        <location evidence="1">Microtubule organizing center</location>
        <location evidence="1">Centrosome</location>
    </subcellularLocation>
    <subcellularLocation>
        <location evidence="1">Cytoplasm</location>
        <location evidence="1">Cytoskeleton</location>
        <location evidence="1">Microtubule organizing center</location>
        <location evidence="1">Centrosome</location>
        <location evidence="1">Centriole</location>
    </subcellularLocation>
    <text evidence="1">Does not localize along the ciliary axoneme.</text>
</comment>
<comment type="similarity">
    <text evidence="2">Belongs to the CEP76 family.</text>
</comment>
<dbReference type="EMBL" id="BC077373">
    <property type="protein sequence ID" value="AAH77373.1"/>
    <property type="molecule type" value="mRNA"/>
</dbReference>
<dbReference type="SMR" id="Q6DDX8"/>
<dbReference type="GeneID" id="108719185"/>
<dbReference type="KEGG" id="xla:108719185"/>
<dbReference type="AGR" id="Xenbase:XB-GENE-966814"/>
<dbReference type="OMA" id="RRWWSEY"/>
<dbReference type="OrthoDB" id="5527234at2759"/>
<dbReference type="Proteomes" id="UP000186698">
    <property type="component" value="Chromosome 6L"/>
</dbReference>
<dbReference type="Bgee" id="108719185">
    <property type="expression patterns" value="Expressed in egg cell and 19 other cell types or tissues"/>
</dbReference>
<dbReference type="GO" id="GO:0005814">
    <property type="term" value="C:centriole"/>
    <property type="evidence" value="ECO:0000250"/>
    <property type="project" value="UniProtKB"/>
</dbReference>
<dbReference type="GO" id="GO:0005813">
    <property type="term" value="C:centrosome"/>
    <property type="evidence" value="ECO:0007669"/>
    <property type="project" value="UniProtKB-SubCell"/>
</dbReference>
<dbReference type="GO" id="GO:0005737">
    <property type="term" value="C:cytoplasm"/>
    <property type="evidence" value="ECO:0007669"/>
    <property type="project" value="UniProtKB-KW"/>
</dbReference>
<dbReference type="GO" id="GO:0046599">
    <property type="term" value="P:regulation of centriole replication"/>
    <property type="evidence" value="ECO:0000250"/>
    <property type="project" value="UniProtKB"/>
</dbReference>
<dbReference type="FunFam" id="3.10.620.30:FF:000003">
    <property type="entry name" value="Centrosomal protein of 76 kDa"/>
    <property type="match status" value="1"/>
</dbReference>
<dbReference type="Gene3D" id="3.10.620.30">
    <property type="match status" value="1"/>
</dbReference>
<dbReference type="InterPro" id="IPR052299">
    <property type="entry name" value="CEP76"/>
</dbReference>
<dbReference type="InterPro" id="IPR028926">
    <property type="entry name" value="CEP76-C2"/>
</dbReference>
<dbReference type="InterPro" id="IPR056288">
    <property type="entry name" value="CEP76_C"/>
</dbReference>
<dbReference type="InterPro" id="IPR056289">
    <property type="entry name" value="CEP76_N"/>
</dbReference>
<dbReference type="InterPro" id="IPR056290">
    <property type="entry name" value="CEPT76/DRC7_peptidase-like_dom"/>
</dbReference>
<dbReference type="InterPro" id="IPR038765">
    <property type="entry name" value="Papain-like_cys_pep_sf"/>
</dbReference>
<dbReference type="PANTHER" id="PTHR46436">
    <property type="entry name" value="CENTROSOMAL PROTEIN OF 76 KDA"/>
    <property type="match status" value="1"/>
</dbReference>
<dbReference type="PANTHER" id="PTHR46436:SF1">
    <property type="entry name" value="CENTROSOMAL PROTEIN OF 76 KDA"/>
    <property type="match status" value="1"/>
</dbReference>
<dbReference type="Pfam" id="PF15627">
    <property type="entry name" value="CEP76-C2"/>
    <property type="match status" value="1"/>
</dbReference>
<dbReference type="Pfam" id="PF24652">
    <property type="entry name" value="CEP76_C"/>
    <property type="match status" value="1"/>
</dbReference>
<dbReference type="Pfam" id="PF24654">
    <property type="entry name" value="CEP76_N"/>
    <property type="match status" value="1"/>
</dbReference>
<dbReference type="Pfam" id="PF24656">
    <property type="entry name" value="CEPT76_peptidase"/>
    <property type="match status" value="1"/>
</dbReference>
<dbReference type="SUPFAM" id="SSF54001">
    <property type="entry name" value="Cysteine proteinases"/>
    <property type="match status" value="1"/>
</dbReference>
<organism>
    <name type="scientific">Xenopus laevis</name>
    <name type="common">African clawed frog</name>
    <dbReference type="NCBI Taxonomy" id="8355"/>
    <lineage>
        <taxon>Eukaryota</taxon>
        <taxon>Metazoa</taxon>
        <taxon>Chordata</taxon>
        <taxon>Craniata</taxon>
        <taxon>Vertebrata</taxon>
        <taxon>Euteleostomi</taxon>
        <taxon>Amphibia</taxon>
        <taxon>Batrachia</taxon>
        <taxon>Anura</taxon>
        <taxon>Pipoidea</taxon>
        <taxon>Pipidae</taxon>
        <taxon>Xenopodinae</taxon>
        <taxon>Xenopus</taxon>
        <taxon>Xenopus</taxon>
    </lineage>
</organism>
<name>CEP76_XENLA</name>
<feature type="chain" id="PRO_0000378951" description="Centrosomal protein of 76 kDa">
    <location>
        <begin position="1"/>
        <end position="661"/>
    </location>
</feature>
<proteinExistence type="evidence at transcript level"/>